<gene>
    <name evidence="1" type="primary">mat</name>
    <name type="ordered locus">YG5714_2057</name>
</gene>
<reference key="1">
    <citation type="journal article" date="2009" name="Proc. Natl. Acad. Sci. U.S.A.">
        <title>Biogeography of the Sulfolobus islandicus pan-genome.</title>
        <authorList>
            <person name="Reno M.L."/>
            <person name="Held N.L."/>
            <person name="Fields C.J."/>
            <person name="Burke P.V."/>
            <person name="Whitaker R.J."/>
        </authorList>
    </citation>
    <scope>NUCLEOTIDE SEQUENCE [LARGE SCALE GENOMIC DNA]</scope>
    <source>
        <strain>Y.G.57.14 / Yellowstone #1</strain>
    </source>
</reference>
<name>METK_SACI7</name>
<protein>
    <recommendedName>
        <fullName evidence="1">S-adenosylmethionine synthase</fullName>
        <shortName evidence="1">AdoMet synthase</shortName>
        <ecNumber evidence="1">2.5.1.6</ecNumber>
    </recommendedName>
    <alternativeName>
        <fullName evidence="1">Methionine adenosyltransferase</fullName>
    </alternativeName>
</protein>
<proteinExistence type="inferred from homology"/>
<comment type="function">
    <text evidence="1">Catalyzes the formation of S-adenosylmethionine from methionine and ATP.</text>
</comment>
<comment type="catalytic activity">
    <reaction evidence="1">
        <text>L-methionine + ATP + H2O = S-adenosyl-L-methionine + phosphate + diphosphate</text>
        <dbReference type="Rhea" id="RHEA:21080"/>
        <dbReference type="ChEBI" id="CHEBI:15377"/>
        <dbReference type="ChEBI" id="CHEBI:30616"/>
        <dbReference type="ChEBI" id="CHEBI:33019"/>
        <dbReference type="ChEBI" id="CHEBI:43474"/>
        <dbReference type="ChEBI" id="CHEBI:57844"/>
        <dbReference type="ChEBI" id="CHEBI:59789"/>
        <dbReference type="EC" id="2.5.1.6"/>
    </reaction>
</comment>
<comment type="cofactor">
    <cofactor evidence="1">
        <name>Mg(2+)</name>
        <dbReference type="ChEBI" id="CHEBI:18420"/>
    </cofactor>
</comment>
<comment type="pathway">
    <text evidence="1">Amino-acid biosynthesis; S-adenosyl-L-methionine biosynthesis; S-adenosyl-L-methionine from L-methionine: step 1/1.</text>
</comment>
<comment type="similarity">
    <text evidence="1">Belongs to the AdoMet synthase 2 family.</text>
</comment>
<dbReference type="EC" id="2.5.1.6" evidence="1"/>
<dbReference type="EMBL" id="CP001403">
    <property type="protein sequence ID" value="ACP46311.1"/>
    <property type="molecule type" value="Genomic_DNA"/>
</dbReference>
<dbReference type="RefSeq" id="WP_012711906.1">
    <property type="nucleotide sequence ID" value="NC_012622.1"/>
</dbReference>
<dbReference type="SMR" id="C3N824"/>
<dbReference type="KEGG" id="siy:YG5714_2057"/>
<dbReference type="HOGENOM" id="CLU_057642_0_0_2"/>
<dbReference type="UniPathway" id="UPA00315">
    <property type="reaction ID" value="UER00080"/>
</dbReference>
<dbReference type="Proteomes" id="UP000002308">
    <property type="component" value="Chromosome"/>
</dbReference>
<dbReference type="GO" id="GO:0005524">
    <property type="term" value="F:ATP binding"/>
    <property type="evidence" value="ECO:0007669"/>
    <property type="project" value="UniProtKB-UniRule"/>
</dbReference>
<dbReference type="GO" id="GO:0000287">
    <property type="term" value="F:magnesium ion binding"/>
    <property type="evidence" value="ECO:0007669"/>
    <property type="project" value="UniProtKB-UniRule"/>
</dbReference>
<dbReference type="GO" id="GO:0004478">
    <property type="term" value="F:methionine adenosyltransferase activity"/>
    <property type="evidence" value="ECO:0007669"/>
    <property type="project" value="UniProtKB-UniRule"/>
</dbReference>
<dbReference type="GO" id="GO:0006730">
    <property type="term" value="P:one-carbon metabolic process"/>
    <property type="evidence" value="ECO:0007669"/>
    <property type="project" value="UniProtKB-KW"/>
</dbReference>
<dbReference type="GO" id="GO:0006556">
    <property type="term" value="P:S-adenosylmethionine biosynthetic process"/>
    <property type="evidence" value="ECO:0007669"/>
    <property type="project" value="UniProtKB-UniRule"/>
</dbReference>
<dbReference type="Gene3D" id="3.30.300.10">
    <property type="match status" value="1"/>
</dbReference>
<dbReference type="Gene3D" id="3.30.300.280">
    <property type="entry name" value="S-adenosylmethionine synthetase, C-terminal domain"/>
    <property type="match status" value="2"/>
</dbReference>
<dbReference type="HAMAP" id="MF_00136">
    <property type="entry name" value="S_AdoMet_synth2"/>
    <property type="match status" value="1"/>
</dbReference>
<dbReference type="InterPro" id="IPR027790">
    <property type="entry name" value="AdoMet_synthase_2_family"/>
</dbReference>
<dbReference type="InterPro" id="IPR042544">
    <property type="entry name" value="AdoMet_synthase_3"/>
</dbReference>
<dbReference type="InterPro" id="IPR002795">
    <property type="entry name" value="S-AdoMet_synthetase_arc"/>
</dbReference>
<dbReference type="NCBIfam" id="NF003365">
    <property type="entry name" value="PRK04439.1-4"/>
    <property type="match status" value="1"/>
</dbReference>
<dbReference type="NCBIfam" id="NF003366">
    <property type="entry name" value="PRK04439.1-5"/>
    <property type="match status" value="1"/>
</dbReference>
<dbReference type="PANTHER" id="PTHR36697">
    <property type="entry name" value="S-ADENOSYLMETHIONINE SYNTHASE"/>
    <property type="match status" value="1"/>
</dbReference>
<dbReference type="PANTHER" id="PTHR36697:SF1">
    <property type="entry name" value="S-ADENOSYLMETHIONINE SYNTHASE"/>
    <property type="match status" value="1"/>
</dbReference>
<dbReference type="Pfam" id="PF01941">
    <property type="entry name" value="AdoMet_Synthase"/>
    <property type="match status" value="1"/>
</dbReference>
<keyword id="KW-0067">ATP-binding</keyword>
<keyword id="KW-0460">Magnesium</keyword>
<keyword id="KW-0547">Nucleotide-binding</keyword>
<keyword id="KW-0554">One-carbon metabolism</keyword>
<keyword id="KW-0808">Transferase</keyword>
<evidence type="ECO:0000255" key="1">
    <source>
        <dbReference type="HAMAP-Rule" id="MF_00136"/>
    </source>
</evidence>
<organism>
    <name type="scientific">Saccharolobus islandicus (strain Y.G.57.14 / Yellowstone #1)</name>
    <name type="common">Sulfolobus islandicus</name>
    <dbReference type="NCBI Taxonomy" id="439386"/>
    <lineage>
        <taxon>Archaea</taxon>
        <taxon>Thermoproteota</taxon>
        <taxon>Thermoprotei</taxon>
        <taxon>Sulfolobales</taxon>
        <taxon>Sulfolobaceae</taxon>
        <taxon>Saccharolobus</taxon>
    </lineage>
</organism>
<sequence>MRNINVQLNPLSDIEKLQVELVERKGLGHPDYIADAVAEEASRKLSLYYLKKYGVILHHNLDKTLVVGGQATPRFKGGDVIQPIYIVVAGRATTEVKTESGIEQIPVGTIIIESVKEWIRNNFRYLDAEKHLIVDYKIGKGSTDLVGIFEAGKRVPLSNDTSFGVGFAPFTKLEKLVYETERHLNSKQFKAKLPEVGEDIKVMGLRRGNEVDLTIAMATISELIEDVNHYINVKEQAKNEILDLASKIAPDYDVRIYVNTGDKIDKNILYLTVTGTSAEHGDDGMTGRGNRGVGLITPMRPMSLEATAGKNPVNHVGKLYNVLANLIANKIAQEVKDVKFSQVQVLGQIGRPIDDPLIANVDVITYDGKLNDETKNEISGIVDEMLSSFNKLTELILEGKATLF</sequence>
<feature type="chain" id="PRO_1000203219" description="S-adenosylmethionine synthase">
    <location>
        <begin position="1"/>
        <end position="404"/>
    </location>
</feature>
<feature type="binding site" evidence="1">
    <location>
        <begin position="139"/>
        <end position="144"/>
    </location>
    <ligand>
        <name>ATP</name>
        <dbReference type="ChEBI" id="CHEBI:30616"/>
    </ligand>
</feature>
<accession>C3N824</accession>